<dbReference type="EMBL" id="BC118356">
    <property type="protein sequence ID" value="AAI18357.1"/>
    <property type="molecule type" value="mRNA"/>
</dbReference>
<dbReference type="RefSeq" id="NP_001069483.1">
    <property type="nucleotide sequence ID" value="NM_001076015.2"/>
</dbReference>
<dbReference type="PDB" id="3JD5">
    <property type="method" value="EM"/>
    <property type="resolution" value="7.00 A"/>
    <property type="chains" value="h=1-386"/>
</dbReference>
<dbReference type="PDB" id="6NEQ">
    <property type="method" value="EM"/>
    <property type="resolution" value="3.32 A"/>
    <property type="chains" value="h=1-386"/>
</dbReference>
<dbReference type="PDB" id="6NF8">
    <property type="method" value="EM"/>
    <property type="resolution" value="3.48 A"/>
    <property type="chains" value="h=1-386"/>
</dbReference>
<dbReference type="PDBsum" id="3JD5"/>
<dbReference type="PDBsum" id="6NEQ"/>
<dbReference type="PDBsum" id="6NF8"/>
<dbReference type="EMDB" id="EMD-9358"/>
<dbReference type="EMDB" id="EMD-9362"/>
<dbReference type="SMR" id="P82925"/>
<dbReference type="CORUM" id="P82925"/>
<dbReference type="FunCoup" id="P82925">
    <property type="interactions" value="2169"/>
</dbReference>
<dbReference type="IntAct" id="P82925">
    <property type="interactions" value="2"/>
</dbReference>
<dbReference type="STRING" id="9913.ENSBTAP00000045471"/>
<dbReference type="PaxDb" id="9913-ENSBTAP00000045471"/>
<dbReference type="Ensembl" id="ENSBTAT00000048428.3">
    <property type="protein sequence ID" value="ENSBTAP00000045471.3"/>
    <property type="gene ID" value="ENSBTAG00000015522.6"/>
</dbReference>
<dbReference type="GeneID" id="534185"/>
<dbReference type="KEGG" id="bta:534185"/>
<dbReference type="CTD" id="10240"/>
<dbReference type="VGNC" id="VGNC:31670">
    <property type="gene designation" value="MRPS31"/>
</dbReference>
<dbReference type="eggNOG" id="ENOG502QSX9">
    <property type="taxonomic scope" value="Eukaryota"/>
</dbReference>
<dbReference type="GeneTree" id="ENSGT00390000010017"/>
<dbReference type="HOGENOM" id="CLU_052666_0_0_1"/>
<dbReference type="InParanoid" id="P82925"/>
<dbReference type="OrthoDB" id="5989925at2759"/>
<dbReference type="TreeFam" id="TF324305"/>
<dbReference type="Proteomes" id="UP000009136">
    <property type="component" value="Chromosome 12"/>
</dbReference>
<dbReference type="GO" id="GO:0005743">
    <property type="term" value="C:mitochondrial inner membrane"/>
    <property type="evidence" value="ECO:0000304"/>
    <property type="project" value="Reactome"/>
</dbReference>
<dbReference type="GO" id="GO:0005763">
    <property type="term" value="C:mitochondrial small ribosomal subunit"/>
    <property type="evidence" value="ECO:0000314"/>
    <property type="project" value="UniProtKB"/>
</dbReference>
<dbReference type="GO" id="GO:0005730">
    <property type="term" value="C:nucleolus"/>
    <property type="evidence" value="ECO:0007669"/>
    <property type="project" value="Ensembl"/>
</dbReference>
<dbReference type="GO" id="GO:0019904">
    <property type="term" value="F:protein domain specific binding"/>
    <property type="evidence" value="ECO:0007669"/>
    <property type="project" value="Ensembl"/>
</dbReference>
<dbReference type="GO" id="GO:0003735">
    <property type="term" value="F:structural constituent of ribosome"/>
    <property type="evidence" value="ECO:0007669"/>
    <property type="project" value="InterPro"/>
</dbReference>
<dbReference type="InterPro" id="IPR026299">
    <property type="entry name" value="MRP-S31"/>
</dbReference>
<dbReference type="PANTHER" id="PTHR13231">
    <property type="entry name" value="MITOCHONDRIAL RIBOSOMAL PROTEIN S31"/>
    <property type="match status" value="1"/>
</dbReference>
<dbReference type="PANTHER" id="PTHR13231:SF3">
    <property type="entry name" value="SMALL RIBOSOMAL SUBUNIT PROTEIN MS31"/>
    <property type="match status" value="1"/>
</dbReference>
<dbReference type="Pfam" id="PF15433">
    <property type="entry name" value="MRP-S31"/>
    <property type="match status" value="1"/>
</dbReference>
<gene>
    <name type="primary">MRPS31</name>
</gene>
<reference key="1">
    <citation type="submission" date="2006-06" db="EMBL/GenBank/DDBJ databases">
        <authorList>
            <consortium name="NIH - Mammalian Gene Collection (MGC) project"/>
        </authorList>
    </citation>
    <scope>NUCLEOTIDE SEQUENCE [LARGE SCALE MRNA]</scope>
    <source>
        <strain>Hereford</strain>
        <tissue>Fetal cerebellum</tissue>
    </source>
</reference>
<reference evidence="4" key="2">
    <citation type="journal article" date="2001" name="J. Biol. Chem.">
        <title>The small subunit of the mammalian mitochondrial ribosome: identification of the full complement of ribosomal proteins present.</title>
        <authorList>
            <person name="Koc E.C."/>
            <person name="Burkhart W."/>
            <person name="Blackburn K."/>
            <person name="Moseley A."/>
            <person name="Spremulli L.L."/>
        </authorList>
    </citation>
    <scope>PROTEIN SEQUENCE OF 188-198; 276-297; 301-351 AND 361-374</scope>
    <scope>IDENTIFICATION IN THE 28S MITOCHONDRIAL RIBOSOME</scope>
    <scope>SUBCELLULAR LOCATION</scope>
    <source>
        <tissue>Liver</tissue>
    </source>
</reference>
<reference evidence="5" key="3">
    <citation type="journal article" date="2014" name="Proc. Natl. Acad. Sci. U.S.A.">
        <title>Cryo-EM structure of the small subunit of the mammalian mitochondrial ribosome.</title>
        <authorList>
            <person name="Kaushal P.S."/>
            <person name="Sharma M.R."/>
            <person name="Booth T.M."/>
            <person name="Haque E.M."/>
            <person name="Tung C.S."/>
            <person name="Sanbonmatsu K.Y."/>
            <person name="Spremulli L.L."/>
            <person name="Agrawal R.K."/>
        </authorList>
    </citation>
    <scope>STRUCTURE BY ELECTRON MICROSCOPY (7.00 ANGSTROMS)</scope>
    <scope>SUBUNIT</scope>
    <scope>SUBCELLULAR LOCATION</scope>
</reference>
<organism evidence="4">
    <name type="scientific">Bos taurus</name>
    <name type="common">Bovine</name>
    <dbReference type="NCBI Taxonomy" id="9913"/>
    <lineage>
        <taxon>Eukaryota</taxon>
        <taxon>Metazoa</taxon>
        <taxon>Chordata</taxon>
        <taxon>Craniata</taxon>
        <taxon>Vertebrata</taxon>
        <taxon>Euteleostomi</taxon>
        <taxon>Mammalia</taxon>
        <taxon>Eutheria</taxon>
        <taxon>Laurasiatheria</taxon>
        <taxon>Artiodactyla</taxon>
        <taxon>Ruminantia</taxon>
        <taxon>Pecora</taxon>
        <taxon>Bovidae</taxon>
        <taxon>Bovinae</taxon>
        <taxon>Bos</taxon>
    </lineage>
</organism>
<protein>
    <recommendedName>
        <fullName evidence="4">Small ribosomal subunit protein mS31</fullName>
    </recommendedName>
    <alternativeName>
        <fullName>28S ribosomal protein S31, mitochondrial</fullName>
        <shortName>MRP-S31</shortName>
        <shortName>S31mt</shortName>
    </alternativeName>
</protein>
<comment type="subunit">
    <text evidence="2 3">Component of the mitochondrial ribosome small subunit (28S) which comprises a 12S rRNA and about 30 distinct proteins.</text>
</comment>
<comment type="subcellular location">
    <subcellularLocation>
        <location evidence="2 3">Mitochondrion</location>
    </subcellularLocation>
</comment>
<comment type="similarity">
    <text evidence="4">Belongs to the mitochondrion-specific ribosomal protein mS31 family.</text>
</comment>
<proteinExistence type="evidence at protein level"/>
<feature type="transit peptide" description="Mitochondrion" evidence="1">
    <location>
        <begin position="1"/>
        <end status="unknown"/>
    </location>
</feature>
<feature type="chain" id="PRO_0000087722" description="Small ribosomal subunit protein mS31">
    <location>
        <begin status="unknown"/>
        <end position="386"/>
    </location>
</feature>
<feature type="helix" evidence="6">
    <location>
        <begin position="288"/>
        <end position="298"/>
    </location>
</feature>
<feature type="turn" evidence="7">
    <location>
        <begin position="308"/>
        <end position="311"/>
    </location>
</feature>
<feature type="helix" evidence="6">
    <location>
        <begin position="314"/>
        <end position="316"/>
    </location>
</feature>
<feature type="turn" evidence="6">
    <location>
        <begin position="320"/>
        <end position="322"/>
    </location>
</feature>
<feature type="helix" evidence="6">
    <location>
        <begin position="327"/>
        <end position="329"/>
    </location>
</feature>
<feature type="strand" evidence="6">
    <location>
        <begin position="334"/>
        <end position="336"/>
    </location>
</feature>
<feature type="helix" evidence="6">
    <location>
        <begin position="337"/>
        <end position="350"/>
    </location>
</feature>
<feature type="helix" evidence="6">
    <location>
        <begin position="357"/>
        <end position="373"/>
    </location>
</feature>
<feature type="helix" evidence="6">
    <location>
        <begin position="376"/>
        <end position="381"/>
    </location>
</feature>
<name>RT31_BOVIN</name>
<keyword id="KW-0002">3D-structure</keyword>
<keyword id="KW-0903">Direct protein sequencing</keyword>
<keyword id="KW-0496">Mitochondrion</keyword>
<keyword id="KW-1185">Reference proteome</keyword>
<keyword id="KW-0687">Ribonucleoprotein</keyword>
<keyword id="KW-0689">Ribosomal protein</keyword>
<keyword id="KW-0809">Transit peptide</keyword>
<sequence length="386" mass="43676">MFPRVSAVLPFRPLSRLPLCSAGPEASAATVVPLASPHGTVRTKCNIQRYFGTNSVIYSKKDDKSVPACEISKETENQGSTKENKKKDLVNIIKGMKVELSTVNVQTTKPPNRGQLKSLEAAIRRLQKSPEDAPQKSKSLSPELVAAATAVADSLPFDKQTTKSELLRQLRQHEEDSKAQKDGEKPKISFSNIISDMKVARSSTARASTRPVHQIQFDEGADDFVDREETADLRKRFRKNIFKGKRLNIFELKPVTEEAPETEAAPSLWDVEFAKQLAAVTEQPFQNGFEEMIQWTKEGKLWEFPINNEAGFDDDGSEFHEHIFLDKYLEGFPKQGPIRHFMELVTCGLSKNPYLSVKQKVEHIEWFRNYFNEKQDILKESGINFS</sequence>
<accession>P82925</accession>
<accession>Q148G3</accession>
<evidence type="ECO:0000255" key="1"/>
<evidence type="ECO:0000269" key="2">
    <source>
    </source>
</evidence>
<evidence type="ECO:0000269" key="3">
    <source>
    </source>
</evidence>
<evidence type="ECO:0000305" key="4"/>
<evidence type="ECO:0007744" key="5">
    <source>
        <dbReference type="PDB" id="3JD5"/>
    </source>
</evidence>
<evidence type="ECO:0007829" key="6">
    <source>
        <dbReference type="PDB" id="6NEQ"/>
    </source>
</evidence>
<evidence type="ECO:0007829" key="7">
    <source>
        <dbReference type="PDB" id="6NF8"/>
    </source>
</evidence>